<protein>
    <recommendedName>
        <fullName>Na(+)/H(+) antiporter subunit A1</fullName>
    </recommendedName>
    <alternativeName>
        <fullName>Mnh complex subunit A1</fullName>
    </alternativeName>
</protein>
<reference key="1">
    <citation type="book" date="2006" name="Gram positive pathogens, 2nd edition">
        <title>The Staphylococcus aureus NCTC 8325 genome.</title>
        <editorList>
            <person name="Fischetti V."/>
            <person name="Novick R."/>
            <person name="Ferretti J."/>
            <person name="Portnoy D."/>
            <person name="Rood J."/>
        </editorList>
        <authorList>
            <person name="Gillaspy A.F."/>
            <person name="Worrell V."/>
            <person name="Orvis J."/>
            <person name="Roe B.A."/>
            <person name="Dyer D.W."/>
            <person name="Iandolo J.J."/>
        </authorList>
    </citation>
    <scope>NUCLEOTIDE SEQUENCE [LARGE SCALE GENOMIC DNA]</scope>
    <source>
        <strain>NCTC 8325 / PS 47</strain>
    </source>
</reference>
<gene>
    <name type="primary">mnhA1</name>
    <name type="ordered locus">SAOUHSC_00889</name>
</gene>
<dbReference type="EMBL" id="CP000253">
    <property type="protein sequence ID" value="ABD30014.1"/>
    <property type="molecule type" value="Genomic_DNA"/>
</dbReference>
<dbReference type="RefSeq" id="WP_000054609.1">
    <property type="nucleotide sequence ID" value="NZ_LS483365.1"/>
</dbReference>
<dbReference type="RefSeq" id="YP_499442.1">
    <property type="nucleotide sequence ID" value="NC_007795.1"/>
</dbReference>
<dbReference type="SMR" id="Q2FZV1"/>
<dbReference type="STRING" id="93061.SAOUHSC_00889"/>
<dbReference type="PaxDb" id="1280-SAXN108_0947"/>
<dbReference type="GeneID" id="3921735"/>
<dbReference type="KEGG" id="sao:SAOUHSC_00889"/>
<dbReference type="PATRIC" id="fig|93061.5.peg.809"/>
<dbReference type="eggNOG" id="COG1009">
    <property type="taxonomic scope" value="Bacteria"/>
</dbReference>
<dbReference type="eggNOG" id="COG2111">
    <property type="taxonomic scope" value="Bacteria"/>
</dbReference>
<dbReference type="HOGENOM" id="CLU_007100_2_1_9"/>
<dbReference type="OrthoDB" id="9807568at2"/>
<dbReference type="PRO" id="PR:Q2FZV1"/>
<dbReference type="Proteomes" id="UP000008816">
    <property type="component" value="Chromosome"/>
</dbReference>
<dbReference type="GO" id="GO:0005886">
    <property type="term" value="C:plasma membrane"/>
    <property type="evidence" value="ECO:0007669"/>
    <property type="project" value="UniProtKB-SubCell"/>
</dbReference>
<dbReference type="GO" id="GO:0015297">
    <property type="term" value="F:antiporter activity"/>
    <property type="evidence" value="ECO:0007669"/>
    <property type="project" value="UniProtKB-KW"/>
</dbReference>
<dbReference type="GO" id="GO:1902600">
    <property type="term" value="P:proton transmembrane transport"/>
    <property type="evidence" value="ECO:0007669"/>
    <property type="project" value="UniProtKB-KW"/>
</dbReference>
<dbReference type="GO" id="GO:0006814">
    <property type="term" value="P:sodium ion transport"/>
    <property type="evidence" value="ECO:0007669"/>
    <property type="project" value="UniProtKB-KW"/>
</dbReference>
<dbReference type="InterPro" id="IPR050616">
    <property type="entry name" value="CPA3_Na-H_Antiporter_A"/>
</dbReference>
<dbReference type="InterPro" id="IPR005663">
    <property type="entry name" value="MrpA/MnhA1/PhaAB"/>
</dbReference>
<dbReference type="InterPro" id="IPR025383">
    <property type="entry name" value="MrpA_C/MbhD"/>
</dbReference>
<dbReference type="InterPro" id="IPR046806">
    <property type="entry name" value="MrpA_C/MbhE"/>
</dbReference>
<dbReference type="InterPro" id="IPR001750">
    <property type="entry name" value="ND/Mrp_TM"/>
</dbReference>
<dbReference type="InterPro" id="IPR001516">
    <property type="entry name" value="Proton_antipo_N"/>
</dbReference>
<dbReference type="NCBIfam" id="TIGR00940">
    <property type="entry name" value="2a6301s01"/>
    <property type="match status" value="1"/>
</dbReference>
<dbReference type="NCBIfam" id="NF009285">
    <property type="entry name" value="PRK12645.1"/>
    <property type="match status" value="1"/>
</dbReference>
<dbReference type="PANTHER" id="PTHR43373">
    <property type="entry name" value="NA(+)/H(+) ANTIPORTER SUBUNIT"/>
    <property type="match status" value="1"/>
</dbReference>
<dbReference type="PANTHER" id="PTHR43373:SF1">
    <property type="entry name" value="NA(+)_H(+) ANTIPORTER SUBUNIT A"/>
    <property type="match status" value="1"/>
</dbReference>
<dbReference type="Pfam" id="PF13244">
    <property type="entry name" value="MbhD"/>
    <property type="match status" value="1"/>
</dbReference>
<dbReference type="Pfam" id="PF20501">
    <property type="entry name" value="MbhE"/>
    <property type="match status" value="1"/>
</dbReference>
<dbReference type="Pfam" id="PF00361">
    <property type="entry name" value="Proton_antipo_M"/>
    <property type="match status" value="1"/>
</dbReference>
<dbReference type="Pfam" id="PF00662">
    <property type="entry name" value="Proton_antipo_N"/>
    <property type="match status" value="1"/>
</dbReference>
<dbReference type="PRINTS" id="PR01434">
    <property type="entry name" value="NADHDHGNASE5"/>
</dbReference>
<dbReference type="PRINTS" id="PR01435">
    <property type="entry name" value="NPOXDRDTASE5"/>
</dbReference>
<accession>Q2FZV1</accession>
<keyword id="KW-0050">Antiport</keyword>
<keyword id="KW-1003">Cell membrane</keyword>
<keyword id="KW-0375">Hydrogen ion transport</keyword>
<keyword id="KW-0406">Ion transport</keyword>
<keyword id="KW-0472">Membrane</keyword>
<keyword id="KW-1185">Reference proteome</keyword>
<keyword id="KW-0915">Sodium</keyword>
<keyword id="KW-0739">Sodium transport</keyword>
<keyword id="KW-0812">Transmembrane</keyword>
<keyword id="KW-1133">Transmembrane helix</keyword>
<keyword id="KW-0813">Transport</keyword>
<proteinExistence type="inferred from homology"/>
<comment type="function">
    <text evidence="1">Mnh complex is a Na(+)/H(+) antiporter involved in Na(+) excretion.</text>
</comment>
<comment type="subunit">
    <text evidence="1">May form a heterooligomeric complex that consists of seven subunits: mnhA1, mnhB1, mnhC1, mnhD1, mnhE1, mnhF1 and mnhG1.</text>
</comment>
<comment type="subcellular location">
    <subcellularLocation>
        <location evidence="3">Cell membrane</location>
        <topology evidence="3">Multi-pass membrane protein</topology>
    </subcellularLocation>
</comment>
<comment type="similarity">
    <text evidence="3">Belongs to the CPA3 antiporters (TC 2.A.63) subunit A family.</text>
</comment>
<organism>
    <name type="scientific">Staphylococcus aureus (strain NCTC 8325 / PS 47)</name>
    <dbReference type="NCBI Taxonomy" id="93061"/>
    <lineage>
        <taxon>Bacteria</taxon>
        <taxon>Bacillati</taxon>
        <taxon>Bacillota</taxon>
        <taxon>Bacilli</taxon>
        <taxon>Bacillales</taxon>
        <taxon>Staphylococcaceae</taxon>
        <taxon>Staphylococcus</taxon>
    </lineage>
</organism>
<name>MNHA1_STAA8</name>
<feature type="chain" id="PRO_0000372097" description="Na(+)/H(+) antiporter subunit A1">
    <location>
        <begin position="1"/>
        <end position="801"/>
    </location>
</feature>
<feature type="transmembrane region" description="Helical" evidence="2">
    <location>
        <begin position="1"/>
        <end position="21"/>
    </location>
</feature>
<feature type="transmembrane region" description="Helical" evidence="2">
    <location>
        <begin position="28"/>
        <end position="48"/>
    </location>
</feature>
<feature type="transmembrane region" description="Helical" evidence="2">
    <location>
        <begin position="79"/>
        <end position="99"/>
    </location>
</feature>
<feature type="transmembrane region" description="Helical" evidence="2">
    <location>
        <begin position="117"/>
        <end position="137"/>
    </location>
</feature>
<feature type="transmembrane region" description="Helical" evidence="2">
    <location>
        <begin position="166"/>
        <end position="186"/>
    </location>
</feature>
<feature type="transmembrane region" description="Helical" evidence="2">
    <location>
        <begin position="206"/>
        <end position="226"/>
    </location>
</feature>
<feature type="transmembrane region" description="Helical" evidence="2">
    <location>
        <begin position="265"/>
        <end position="285"/>
    </location>
</feature>
<feature type="transmembrane region" description="Helical" evidence="2">
    <location>
        <begin position="300"/>
        <end position="320"/>
    </location>
</feature>
<feature type="transmembrane region" description="Helical" evidence="2">
    <location>
        <begin position="337"/>
        <end position="357"/>
    </location>
</feature>
<feature type="transmembrane region" description="Helical" evidence="2">
    <location>
        <begin position="373"/>
        <end position="393"/>
    </location>
</feature>
<feature type="transmembrane region" description="Helical" evidence="2">
    <location>
        <begin position="427"/>
        <end position="447"/>
    </location>
</feature>
<feature type="transmembrane region" description="Helical" evidence="2">
    <location>
        <begin position="472"/>
        <end position="492"/>
    </location>
</feature>
<feature type="transmembrane region" description="Helical" evidence="2">
    <location>
        <begin position="522"/>
        <end position="542"/>
    </location>
</feature>
<feature type="transmembrane region" description="Helical" evidence="2">
    <location>
        <begin position="591"/>
        <end position="611"/>
    </location>
</feature>
<feature type="transmembrane region" description="Helical" evidence="2">
    <location>
        <begin position="623"/>
        <end position="643"/>
    </location>
</feature>
<feature type="transmembrane region" description="Helical" evidence="2">
    <location>
        <begin position="646"/>
        <end position="666"/>
    </location>
</feature>
<feature type="transmembrane region" description="Helical" evidence="2">
    <location>
        <begin position="671"/>
        <end position="691"/>
    </location>
</feature>
<feature type="transmembrane region" description="Helical" evidence="2">
    <location>
        <begin position="707"/>
        <end position="727"/>
    </location>
</feature>
<feature type="transmembrane region" description="Helical" evidence="2">
    <location>
        <begin position="764"/>
        <end position="784"/>
    </location>
</feature>
<evidence type="ECO:0000250" key="1"/>
<evidence type="ECO:0000255" key="2"/>
<evidence type="ECO:0000305" key="3"/>
<sequence length="801" mass="89396">MSLLHIAVILPLIFALIIPILYRFFKRIHLGWFVLPVPIVIFIYMLTLIKTTMSGNTVMKTLNWMPHFGMNFDLYLDGLGLLFSLLISGIGSLVVLYSIGYLSKSEQLGNFYCYLLLFMGAMLGVVLSDNVIILYLFWELTSFSSFLLISFWRERQASIYGAQKSLIITVFGGLSLLGGIILLAIPTQSFSIQYMIQHASEIQNSPFFIFAMILIMIGAFTKSAQFPFYIWLPDAMEAPTPVSAYLHSATMVKAGLYLIARMTPIFAASQGWVWTVTLVGLITLFWASLNATKQQDLKGILAFSTVSQLGMIMAMLGIGAISYHYQGDDSKIYAAAFTAAIFHLINHATFKGALFMITGAVDHSTGTRDVKKLGGLLTIMPISFTITVITALSMAGVPPFNGFLSKESFLETTFTASQANLFSVDTLGYLFPIIGIVGSVFTFVYSIKFIMHIFFGQYKPEQLPKKAHEVSILMLLSPAILATLVIVFGLFPGILTNSIIEPATSSINHTVIDDVEFHMFHGLTPAFLSTLVIYILGILLIVTFSYWVKLLQRQPGKLTFNYWYNRSANVIPNYSEKMTNSYVTDYSRNNLVIIFGALILLTFVTIFSVPFNINFKDVSPIRIFEVCIVILLLSAAFLILFAKSRLFSIIMLSAVGYAVSVLFIFFKAPDLALTQFVVESISTALFLLCFYHLPNLNRYNEKRSFQLTNALIAGGVGLSVIIIGLIAYGNRHFESISKFYQEHVYDLAHGKNMVNVILVDFRGMDTLFESSVLGIAGLAVYTMIKLRKKRQTQGNEVKNHE</sequence>